<dbReference type="EMBL" id="AL646052">
    <property type="protein sequence ID" value="CAD14767.1"/>
    <property type="molecule type" value="Genomic_DNA"/>
</dbReference>
<dbReference type="RefSeq" id="WP_011001015.1">
    <property type="nucleotide sequence ID" value="NC_003295.1"/>
</dbReference>
<dbReference type="SMR" id="Q8Y0H9"/>
<dbReference type="STRING" id="267608.RSc1065"/>
<dbReference type="EnsemblBacteria" id="CAD14767">
    <property type="protein sequence ID" value="CAD14767"/>
    <property type="gene ID" value="RSc1065"/>
</dbReference>
<dbReference type="KEGG" id="rso:RSc1065"/>
<dbReference type="eggNOG" id="COG1381">
    <property type="taxonomic scope" value="Bacteria"/>
</dbReference>
<dbReference type="HOGENOM" id="CLU_066645_0_0_4"/>
<dbReference type="Proteomes" id="UP000001436">
    <property type="component" value="Chromosome"/>
</dbReference>
<dbReference type="GO" id="GO:0043590">
    <property type="term" value="C:bacterial nucleoid"/>
    <property type="evidence" value="ECO:0007669"/>
    <property type="project" value="TreeGrafter"/>
</dbReference>
<dbReference type="GO" id="GO:0006310">
    <property type="term" value="P:DNA recombination"/>
    <property type="evidence" value="ECO:0007669"/>
    <property type="project" value="UniProtKB-UniRule"/>
</dbReference>
<dbReference type="GO" id="GO:0006302">
    <property type="term" value="P:double-strand break repair"/>
    <property type="evidence" value="ECO:0007669"/>
    <property type="project" value="TreeGrafter"/>
</dbReference>
<dbReference type="Gene3D" id="2.40.50.140">
    <property type="entry name" value="Nucleic acid-binding proteins"/>
    <property type="match status" value="1"/>
</dbReference>
<dbReference type="Gene3D" id="1.20.1440.120">
    <property type="entry name" value="Recombination protein O, C-terminal domain"/>
    <property type="match status" value="1"/>
</dbReference>
<dbReference type="HAMAP" id="MF_00201">
    <property type="entry name" value="RecO"/>
    <property type="match status" value="1"/>
</dbReference>
<dbReference type="InterPro" id="IPR037278">
    <property type="entry name" value="ARFGAP/RecO"/>
</dbReference>
<dbReference type="InterPro" id="IPR022572">
    <property type="entry name" value="DNA_rep/recomb_RecO_N"/>
</dbReference>
<dbReference type="InterPro" id="IPR012340">
    <property type="entry name" value="NA-bd_OB-fold"/>
</dbReference>
<dbReference type="InterPro" id="IPR003717">
    <property type="entry name" value="RecO"/>
</dbReference>
<dbReference type="InterPro" id="IPR042242">
    <property type="entry name" value="RecO_C"/>
</dbReference>
<dbReference type="NCBIfam" id="TIGR00613">
    <property type="entry name" value="reco"/>
    <property type="match status" value="1"/>
</dbReference>
<dbReference type="PANTHER" id="PTHR33991">
    <property type="entry name" value="DNA REPAIR PROTEIN RECO"/>
    <property type="match status" value="1"/>
</dbReference>
<dbReference type="PANTHER" id="PTHR33991:SF1">
    <property type="entry name" value="DNA REPAIR PROTEIN RECO"/>
    <property type="match status" value="1"/>
</dbReference>
<dbReference type="Pfam" id="PF02565">
    <property type="entry name" value="RecO_C"/>
    <property type="match status" value="1"/>
</dbReference>
<dbReference type="Pfam" id="PF11967">
    <property type="entry name" value="RecO_N"/>
    <property type="match status" value="1"/>
</dbReference>
<dbReference type="SUPFAM" id="SSF57863">
    <property type="entry name" value="ArfGap/RecO-like zinc finger"/>
    <property type="match status" value="1"/>
</dbReference>
<dbReference type="SUPFAM" id="SSF50249">
    <property type="entry name" value="Nucleic acid-binding proteins"/>
    <property type="match status" value="1"/>
</dbReference>
<proteinExistence type="inferred from homology"/>
<comment type="function">
    <text evidence="1">Involved in DNA repair and RecF pathway recombination.</text>
</comment>
<comment type="similarity">
    <text evidence="2">Belongs to the RecO family.</text>
</comment>
<keyword id="KW-0227">DNA damage</keyword>
<keyword id="KW-0233">DNA recombination</keyword>
<keyword id="KW-0234">DNA repair</keyword>
<keyword id="KW-1185">Reference proteome</keyword>
<feature type="chain" id="PRO_0000204985" description="DNA repair protein RecO">
    <location>
        <begin position="1"/>
        <end position="272"/>
    </location>
</feature>
<sequence>MAGRSDPIPDEAAEWLAEEGVAGAAPRKGFPAARAEHRVSQQPAFVLHSYPYRETSLIIDVFTRDHGRIALVAKGAKRPHSALRAVLQTFQPLSLSWSGRGEVKTLTRAEWVGGMLPLGGEGLLSGFYLNELLVKFVAREDGHPVLFSHYVETLNKLAHGEPVAFTLRAFERVLLRETGFAAQLDRCVDGEPVQPDGDYVYHPERGIRRALPSDPSSWPVLRGQTLLDMERDDYSRPATATQSRSLMRFLLHYHLHGTPLSTRQILIDLQKL</sequence>
<gene>
    <name type="primary">recO</name>
    <name type="ordered locus">RSc1065</name>
    <name type="ORF">RS04139</name>
</gene>
<organism>
    <name type="scientific">Ralstonia nicotianae (strain ATCC BAA-1114 / GMI1000)</name>
    <name type="common">Ralstonia solanacearum</name>
    <dbReference type="NCBI Taxonomy" id="267608"/>
    <lineage>
        <taxon>Bacteria</taxon>
        <taxon>Pseudomonadati</taxon>
        <taxon>Pseudomonadota</taxon>
        <taxon>Betaproteobacteria</taxon>
        <taxon>Burkholderiales</taxon>
        <taxon>Burkholderiaceae</taxon>
        <taxon>Ralstonia</taxon>
        <taxon>Ralstonia solanacearum species complex</taxon>
    </lineage>
</organism>
<accession>Q8Y0H9</accession>
<evidence type="ECO:0000250" key="1"/>
<evidence type="ECO:0000305" key="2"/>
<protein>
    <recommendedName>
        <fullName>DNA repair protein RecO</fullName>
    </recommendedName>
    <alternativeName>
        <fullName>Recombination protein O</fullName>
    </alternativeName>
</protein>
<reference key="1">
    <citation type="journal article" date="2002" name="Nature">
        <title>Genome sequence of the plant pathogen Ralstonia solanacearum.</title>
        <authorList>
            <person name="Salanoubat M."/>
            <person name="Genin S."/>
            <person name="Artiguenave F."/>
            <person name="Gouzy J."/>
            <person name="Mangenot S."/>
            <person name="Arlat M."/>
            <person name="Billault A."/>
            <person name="Brottier P."/>
            <person name="Camus J.-C."/>
            <person name="Cattolico L."/>
            <person name="Chandler M."/>
            <person name="Choisne N."/>
            <person name="Claudel-Renard C."/>
            <person name="Cunnac S."/>
            <person name="Demange N."/>
            <person name="Gaspin C."/>
            <person name="Lavie M."/>
            <person name="Moisan A."/>
            <person name="Robert C."/>
            <person name="Saurin W."/>
            <person name="Schiex T."/>
            <person name="Siguier P."/>
            <person name="Thebault P."/>
            <person name="Whalen M."/>
            <person name="Wincker P."/>
            <person name="Levy M."/>
            <person name="Weissenbach J."/>
            <person name="Boucher C.A."/>
        </authorList>
    </citation>
    <scope>NUCLEOTIDE SEQUENCE [LARGE SCALE GENOMIC DNA]</scope>
    <source>
        <strain>ATCC BAA-1114 / GMI1000</strain>
    </source>
</reference>
<name>RECO_RALN1</name>